<evidence type="ECO:0000255" key="1">
    <source>
        <dbReference type="HAMAP-Rule" id="MF_01065"/>
    </source>
</evidence>
<sequence>MKYKLLPCLLAILLTGCDRTEVTLSFTPEMASFSNEFDFDPLRGPVKDFTQTLMDEQGEVTKRVSGTLSEEGCFDSLELLDLENNTLVALVLDANYYRDAETLEKRVRLQGKCQLAELPSAGVSWETDDNGFVIKASSKQMQMEYRYDDQGYPLGKTTKSNDKTLSVSATPSTDPIKKLDYTAVTLLNNQRVGNVKQSCEYDNHANPVDCQLIIVDEGVKPAVERVYTIKNTIDYY</sequence>
<feature type="signal peptide" evidence="1">
    <location>
        <begin position="1"/>
        <end position="16"/>
    </location>
</feature>
<feature type="chain" id="PRO_1000064509" description="UPF0257 lipoprotein YnfC">
    <location>
        <begin position="17"/>
        <end position="236"/>
    </location>
</feature>
<feature type="lipid moiety-binding region" description="N-palmitoyl cysteine" evidence="1">
    <location>
        <position position="17"/>
    </location>
</feature>
<feature type="lipid moiety-binding region" description="S-diacylglycerol cysteine" evidence="1">
    <location>
        <position position="17"/>
    </location>
</feature>
<gene>
    <name evidence="1" type="primary">ynfC</name>
    <name type="ordered locus">ECP_1533</name>
</gene>
<dbReference type="EMBL" id="CP000247">
    <property type="protein sequence ID" value="ABG69540.1"/>
    <property type="molecule type" value="Genomic_DNA"/>
</dbReference>
<dbReference type="RefSeq" id="WP_001296084.1">
    <property type="nucleotide sequence ID" value="NC_008253.1"/>
</dbReference>
<dbReference type="SMR" id="Q0THN9"/>
<dbReference type="KEGG" id="ecp:ECP_1533"/>
<dbReference type="HOGENOM" id="CLU_1174761_0_0_6"/>
<dbReference type="Proteomes" id="UP000009182">
    <property type="component" value="Chromosome"/>
</dbReference>
<dbReference type="GO" id="GO:0005886">
    <property type="term" value="C:plasma membrane"/>
    <property type="evidence" value="ECO:0007669"/>
    <property type="project" value="UniProtKB-SubCell"/>
</dbReference>
<dbReference type="HAMAP" id="MF_01065">
    <property type="entry name" value="UPF0257"/>
    <property type="match status" value="1"/>
</dbReference>
<dbReference type="InterPro" id="IPR010646">
    <property type="entry name" value="UPF0257"/>
</dbReference>
<dbReference type="NCBIfam" id="NF002798">
    <property type="entry name" value="PRK02939.1"/>
    <property type="match status" value="1"/>
</dbReference>
<dbReference type="Pfam" id="PF06788">
    <property type="entry name" value="UPF0257"/>
    <property type="match status" value="1"/>
</dbReference>
<dbReference type="PROSITE" id="PS51257">
    <property type="entry name" value="PROKAR_LIPOPROTEIN"/>
    <property type="match status" value="1"/>
</dbReference>
<reference key="1">
    <citation type="journal article" date="2006" name="Mol. Microbiol.">
        <title>Role of pathogenicity island-associated integrases in the genome plasticity of uropathogenic Escherichia coli strain 536.</title>
        <authorList>
            <person name="Hochhut B."/>
            <person name="Wilde C."/>
            <person name="Balling G."/>
            <person name="Middendorf B."/>
            <person name="Dobrindt U."/>
            <person name="Brzuszkiewicz E."/>
            <person name="Gottschalk G."/>
            <person name="Carniel E."/>
            <person name="Hacker J."/>
        </authorList>
    </citation>
    <scope>NUCLEOTIDE SEQUENCE [LARGE SCALE GENOMIC DNA]</scope>
    <source>
        <strain>536 / UPEC</strain>
    </source>
</reference>
<name>YNFC_ECOL5</name>
<comment type="subcellular location">
    <subcellularLocation>
        <location evidence="1">Cell membrane</location>
        <topology evidence="1">Lipid-anchor</topology>
    </subcellularLocation>
</comment>
<comment type="similarity">
    <text evidence="1">Belongs to the UPF0257 family.</text>
</comment>
<organism>
    <name type="scientific">Escherichia coli O6:K15:H31 (strain 536 / UPEC)</name>
    <dbReference type="NCBI Taxonomy" id="362663"/>
    <lineage>
        <taxon>Bacteria</taxon>
        <taxon>Pseudomonadati</taxon>
        <taxon>Pseudomonadota</taxon>
        <taxon>Gammaproteobacteria</taxon>
        <taxon>Enterobacterales</taxon>
        <taxon>Enterobacteriaceae</taxon>
        <taxon>Escherichia</taxon>
    </lineage>
</organism>
<proteinExistence type="inferred from homology"/>
<keyword id="KW-1003">Cell membrane</keyword>
<keyword id="KW-0449">Lipoprotein</keyword>
<keyword id="KW-0472">Membrane</keyword>
<keyword id="KW-0564">Palmitate</keyword>
<keyword id="KW-0732">Signal</keyword>
<accession>Q0THN9</accession>
<protein>
    <recommendedName>
        <fullName evidence="1">UPF0257 lipoprotein YnfC</fullName>
    </recommendedName>
</protein>